<protein>
    <recommendedName>
        <fullName evidence="2">Uncharacterized protein SMPP3</fullName>
    </recommendedName>
</protein>
<evidence type="ECO:0000269" key="1">
    <source>
    </source>
</evidence>
<evidence type="ECO:0000303" key="2">
    <source>
    </source>
</evidence>
<proteinExistence type="evidence at protein level"/>
<accession>P85388</accession>
<organism>
    <name type="scientific">Nautilus macromphalus</name>
    <name type="common">Bellybutton nautilus</name>
    <dbReference type="NCBI Taxonomy" id="34576"/>
    <lineage>
        <taxon>Eukaryota</taxon>
        <taxon>Metazoa</taxon>
        <taxon>Spiralia</taxon>
        <taxon>Lophotrochozoa</taxon>
        <taxon>Mollusca</taxon>
        <taxon>Cephalopoda</taxon>
        <taxon>Nautiloidea</taxon>
        <taxon>Nautilida</taxon>
        <taxon>Nautilidae</taxon>
        <taxon>Nautilus</taxon>
    </lineage>
</organism>
<name>SMP03_NAUMA</name>
<keyword id="KW-0903">Direct protein sequencing</keyword>
<feature type="chain" id="PRO_0000371484" description="Uncharacterized protein SMPP3">
    <location>
        <begin position="1" status="less than"/>
        <end position="9" status="greater than"/>
    </location>
</feature>
<feature type="unsure residue" description="K or Q" evidence="1">
    <location>
        <position position="2"/>
    </location>
</feature>
<feature type="non-terminal residue" evidence="2">
    <location>
        <position position="1"/>
    </location>
</feature>
<feature type="non-terminal residue" evidence="2">
    <location>
        <position position="9"/>
    </location>
</feature>
<comment type="tissue specificity">
    <text evidence="1">Nacreous layer of shell.</text>
</comment>
<sequence length="9" mass="1125">EKGYNPYVR</sequence>
<reference key="1">
    <citation type="journal article" date="2009" name="ChemBioChem">
        <title>Evolution of nacre: biochemistry and 'shellomics' of the shell organic matrix of the cephalopod Nautilus macromphalus.</title>
        <authorList>
            <person name="Marie B."/>
            <person name="Marin F."/>
            <person name="Marie A."/>
            <person name="Bedouet L."/>
            <person name="Dubost L."/>
            <person name="Alcaraz G."/>
            <person name="Milet C."/>
            <person name="Luquet G."/>
        </authorList>
    </citation>
    <scope>PROTEIN SEQUENCE</scope>
    <scope>TISSUE SPECIFICITY</scope>
    <source>
        <tissue>Shell</tissue>
    </source>
</reference>